<proteinExistence type="inferred from homology"/>
<accession>Q0TMS1</accession>
<organism>
    <name type="scientific">Clostridium perfringens (strain ATCC 13124 / DSM 756 / JCM 1290 / NCIMB 6125 / NCTC 8237 / Type A)</name>
    <dbReference type="NCBI Taxonomy" id="195103"/>
    <lineage>
        <taxon>Bacteria</taxon>
        <taxon>Bacillati</taxon>
        <taxon>Bacillota</taxon>
        <taxon>Clostridia</taxon>
        <taxon>Eubacteriales</taxon>
        <taxon>Clostridiaceae</taxon>
        <taxon>Clostridium</taxon>
    </lineage>
</organism>
<protein>
    <recommendedName>
        <fullName evidence="1">Large ribosomal subunit protein bL36</fullName>
    </recommendedName>
    <alternativeName>
        <fullName evidence="2">50S ribosomal protein L36</fullName>
    </alternativeName>
</protein>
<evidence type="ECO:0000255" key="1">
    <source>
        <dbReference type="HAMAP-Rule" id="MF_00251"/>
    </source>
</evidence>
<evidence type="ECO:0000305" key="2"/>
<comment type="similarity">
    <text evidence="1">Belongs to the bacterial ribosomal protein bL36 family.</text>
</comment>
<feature type="chain" id="PRO_0000302185" description="Large ribosomal subunit protein bL36">
    <location>
        <begin position="1"/>
        <end position="37"/>
    </location>
</feature>
<reference key="1">
    <citation type="journal article" date="2006" name="Genome Res.">
        <title>Skewed genomic variability in strains of the toxigenic bacterial pathogen, Clostridium perfringens.</title>
        <authorList>
            <person name="Myers G.S.A."/>
            <person name="Rasko D.A."/>
            <person name="Cheung J.K."/>
            <person name="Ravel J."/>
            <person name="Seshadri R."/>
            <person name="DeBoy R.T."/>
            <person name="Ren Q."/>
            <person name="Varga J."/>
            <person name="Awad M.M."/>
            <person name="Brinkac L.M."/>
            <person name="Daugherty S.C."/>
            <person name="Haft D.H."/>
            <person name="Dodson R.J."/>
            <person name="Madupu R."/>
            <person name="Nelson W.C."/>
            <person name="Rosovitz M.J."/>
            <person name="Sullivan S.A."/>
            <person name="Khouri H."/>
            <person name="Dimitrov G.I."/>
            <person name="Watkins K.L."/>
            <person name="Mulligan S."/>
            <person name="Benton J."/>
            <person name="Radune D."/>
            <person name="Fisher D.J."/>
            <person name="Atkins H.S."/>
            <person name="Hiscox T."/>
            <person name="Jost B.H."/>
            <person name="Billington S.J."/>
            <person name="Songer J.G."/>
            <person name="McClane B.A."/>
            <person name="Titball R.W."/>
            <person name="Rood J.I."/>
            <person name="Melville S.B."/>
            <person name="Paulsen I.T."/>
        </authorList>
    </citation>
    <scope>NUCLEOTIDE SEQUENCE [LARGE SCALE GENOMIC DNA]</scope>
    <source>
        <strain>ATCC 13124 / DSM 756 / JCM 1290 / NCIMB 6125 / NCTC 8237 / S 107 / Type A</strain>
    </source>
</reference>
<sequence length="37" mass="4305">MKVRPSVKPICEKCKVIKRKGRVMVICENPKHKQKQG</sequence>
<dbReference type="EMBL" id="CP000246">
    <property type="protein sequence ID" value="ABG84212.1"/>
    <property type="molecule type" value="Genomic_DNA"/>
</dbReference>
<dbReference type="RefSeq" id="WP_003373491.1">
    <property type="nucleotide sequence ID" value="NC_008261.1"/>
</dbReference>
<dbReference type="SMR" id="Q0TMS1"/>
<dbReference type="STRING" id="195103.CPF_2689"/>
<dbReference type="PaxDb" id="195103-CPF_2689"/>
<dbReference type="GeneID" id="93001034"/>
<dbReference type="KEGG" id="cpf:CPF_2689"/>
<dbReference type="eggNOG" id="COG0257">
    <property type="taxonomic scope" value="Bacteria"/>
</dbReference>
<dbReference type="HOGENOM" id="CLU_135723_6_2_9"/>
<dbReference type="Proteomes" id="UP000001823">
    <property type="component" value="Chromosome"/>
</dbReference>
<dbReference type="GO" id="GO:0005737">
    <property type="term" value="C:cytoplasm"/>
    <property type="evidence" value="ECO:0007669"/>
    <property type="project" value="UniProtKB-ARBA"/>
</dbReference>
<dbReference type="GO" id="GO:1990904">
    <property type="term" value="C:ribonucleoprotein complex"/>
    <property type="evidence" value="ECO:0007669"/>
    <property type="project" value="UniProtKB-KW"/>
</dbReference>
<dbReference type="GO" id="GO:0005840">
    <property type="term" value="C:ribosome"/>
    <property type="evidence" value="ECO:0007669"/>
    <property type="project" value="UniProtKB-KW"/>
</dbReference>
<dbReference type="GO" id="GO:0003735">
    <property type="term" value="F:structural constituent of ribosome"/>
    <property type="evidence" value="ECO:0007669"/>
    <property type="project" value="InterPro"/>
</dbReference>
<dbReference type="GO" id="GO:0006412">
    <property type="term" value="P:translation"/>
    <property type="evidence" value="ECO:0007669"/>
    <property type="project" value="UniProtKB-UniRule"/>
</dbReference>
<dbReference type="HAMAP" id="MF_00251">
    <property type="entry name" value="Ribosomal_bL36"/>
    <property type="match status" value="1"/>
</dbReference>
<dbReference type="InterPro" id="IPR000473">
    <property type="entry name" value="Ribosomal_bL36"/>
</dbReference>
<dbReference type="InterPro" id="IPR035977">
    <property type="entry name" value="Ribosomal_bL36_sp"/>
</dbReference>
<dbReference type="NCBIfam" id="TIGR01022">
    <property type="entry name" value="rpmJ_bact"/>
    <property type="match status" value="1"/>
</dbReference>
<dbReference type="PANTHER" id="PTHR42888">
    <property type="entry name" value="50S RIBOSOMAL PROTEIN L36, CHLOROPLASTIC"/>
    <property type="match status" value="1"/>
</dbReference>
<dbReference type="PANTHER" id="PTHR42888:SF1">
    <property type="entry name" value="LARGE RIBOSOMAL SUBUNIT PROTEIN BL36C"/>
    <property type="match status" value="1"/>
</dbReference>
<dbReference type="Pfam" id="PF00444">
    <property type="entry name" value="Ribosomal_L36"/>
    <property type="match status" value="1"/>
</dbReference>
<dbReference type="SUPFAM" id="SSF57840">
    <property type="entry name" value="Ribosomal protein L36"/>
    <property type="match status" value="1"/>
</dbReference>
<dbReference type="PROSITE" id="PS00828">
    <property type="entry name" value="RIBOSOMAL_L36"/>
    <property type="match status" value="1"/>
</dbReference>
<gene>
    <name evidence="1" type="primary">rpmJ</name>
    <name type="ordered locus">CPF_2689</name>
</gene>
<keyword id="KW-0687">Ribonucleoprotein</keyword>
<keyword id="KW-0689">Ribosomal protein</keyword>
<name>RL36_CLOP1</name>